<name>DAPA_ACIF5</name>
<proteinExistence type="inferred from homology"/>
<accession>B5ELM5</accession>
<evidence type="ECO:0000255" key="1">
    <source>
        <dbReference type="HAMAP-Rule" id="MF_00418"/>
    </source>
</evidence>
<evidence type="ECO:0000305" key="2"/>
<dbReference type="EC" id="4.3.3.7" evidence="1"/>
<dbReference type="EMBL" id="CP001132">
    <property type="protein sequence ID" value="ACH84209.1"/>
    <property type="molecule type" value="Genomic_DNA"/>
</dbReference>
<dbReference type="RefSeq" id="WP_009561191.1">
    <property type="nucleotide sequence ID" value="NC_011206.1"/>
</dbReference>
<dbReference type="SMR" id="B5ELM5"/>
<dbReference type="GeneID" id="65281451"/>
<dbReference type="KEGG" id="afe:Lferr_1992"/>
<dbReference type="eggNOG" id="COG0329">
    <property type="taxonomic scope" value="Bacteria"/>
</dbReference>
<dbReference type="HOGENOM" id="CLU_049343_7_1_6"/>
<dbReference type="UniPathway" id="UPA00034">
    <property type="reaction ID" value="UER00017"/>
</dbReference>
<dbReference type="GO" id="GO:0005829">
    <property type="term" value="C:cytosol"/>
    <property type="evidence" value="ECO:0007669"/>
    <property type="project" value="TreeGrafter"/>
</dbReference>
<dbReference type="GO" id="GO:0008840">
    <property type="term" value="F:4-hydroxy-tetrahydrodipicolinate synthase activity"/>
    <property type="evidence" value="ECO:0007669"/>
    <property type="project" value="UniProtKB-UniRule"/>
</dbReference>
<dbReference type="GO" id="GO:0019877">
    <property type="term" value="P:diaminopimelate biosynthetic process"/>
    <property type="evidence" value="ECO:0007669"/>
    <property type="project" value="UniProtKB-UniRule"/>
</dbReference>
<dbReference type="GO" id="GO:0009089">
    <property type="term" value="P:lysine biosynthetic process via diaminopimelate"/>
    <property type="evidence" value="ECO:0007669"/>
    <property type="project" value="UniProtKB-UniRule"/>
</dbReference>
<dbReference type="CDD" id="cd00950">
    <property type="entry name" value="DHDPS"/>
    <property type="match status" value="1"/>
</dbReference>
<dbReference type="Gene3D" id="3.20.20.70">
    <property type="entry name" value="Aldolase class I"/>
    <property type="match status" value="1"/>
</dbReference>
<dbReference type="HAMAP" id="MF_00418">
    <property type="entry name" value="DapA"/>
    <property type="match status" value="1"/>
</dbReference>
<dbReference type="InterPro" id="IPR013785">
    <property type="entry name" value="Aldolase_TIM"/>
</dbReference>
<dbReference type="InterPro" id="IPR005263">
    <property type="entry name" value="DapA"/>
</dbReference>
<dbReference type="InterPro" id="IPR002220">
    <property type="entry name" value="DapA-like"/>
</dbReference>
<dbReference type="InterPro" id="IPR020625">
    <property type="entry name" value="Schiff_base-form_aldolases_AS"/>
</dbReference>
<dbReference type="InterPro" id="IPR020624">
    <property type="entry name" value="Schiff_base-form_aldolases_CS"/>
</dbReference>
<dbReference type="NCBIfam" id="TIGR00674">
    <property type="entry name" value="dapA"/>
    <property type="match status" value="1"/>
</dbReference>
<dbReference type="PANTHER" id="PTHR12128:SF66">
    <property type="entry name" value="4-HYDROXY-2-OXOGLUTARATE ALDOLASE, MITOCHONDRIAL"/>
    <property type="match status" value="1"/>
</dbReference>
<dbReference type="PANTHER" id="PTHR12128">
    <property type="entry name" value="DIHYDRODIPICOLINATE SYNTHASE"/>
    <property type="match status" value="1"/>
</dbReference>
<dbReference type="Pfam" id="PF00701">
    <property type="entry name" value="DHDPS"/>
    <property type="match status" value="1"/>
</dbReference>
<dbReference type="PIRSF" id="PIRSF001365">
    <property type="entry name" value="DHDPS"/>
    <property type="match status" value="1"/>
</dbReference>
<dbReference type="PRINTS" id="PR00146">
    <property type="entry name" value="DHPICSNTHASE"/>
</dbReference>
<dbReference type="SMART" id="SM01130">
    <property type="entry name" value="DHDPS"/>
    <property type="match status" value="1"/>
</dbReference>
<dbReference type="SUPFAM" id="SSF51569">
    <property type="entry name" value="Aldolase"/>
    <property type="match status" value="1"/>
</dbReference>
<dbReference type="PROSITE" id="PS00665">
    <property type="entry name" value="DHDPS_1"/>
    <property type="match status" value="1"/>
</dbReference>
<dbReference type="PROSITE" id="PS00666">
    <property type="entry name" value="DHDPS_2"/>
    <property type="match status" value="1"/>
</dbReference>
<sequence length="291" mass="31199">MFHGSMVALVTPMQVDGAIDDVALRELVEWHIAEGTHALVAVGTTGESATLEMREHVAVIQTVVEQARGRVPVIAGTGANATHEAIELTRAAMEVKADAALLVSPYYNKPTQEGLFQHYSAIAEHCHFPIILYNVPGRTAGDILPETVARLAPRADIIGIKEASGKVERVAEILALCGDQVQVYSGDDGAALAAMALGARGVISVTANAAPRLMARMCDLALAGDFVGARAVNAQLTGLHRDLFLESNPIPVKWALHEMGRMESVLRLPLTTLSSVHHERLRESLRRAQCI</sequence>
<gene>
    <name evidence="1" type="primary">dapA</name>
    <name type="ordered locus">Lferr_1992</name>
</gene>
<keyword id="KW-0028">Amino-acid biosynthesis</keyword>
<keyword id="KW-0963">Cytoplasm</keyword>
<keyword id="KW-0220">Diaminopimelate biosynthesis</keyword>
<keyword id="KW-0456">Lyase</keyword>
<keyword id="KW-0457">Lysine biosynthesis</keyword>
<keyword id="KW-0704">Schiff base</keyword>
<feature type="chain" id="PRO_1000124013" description="4-hydroxy-tetrahydrodipicolinate synthase">
    <location>
        <begin position="1"/>
        <end position="291"/>
    </location>
</feature>
<feature type="active site" description="Proton donor/acceptor" evidence="1">
    <location>
        <position position="133"/>
    </location>
</feature>
<feature type="active site" description="Schiff-base intermediate with substrate" evidence="1">
    <location>
        <position position="161"/>
    </location>
</feature>
<feature type="binding site" evidence="1">
    <location>
        <position position="45"/>
    </location>
    <ligand>
        <name>pyruvate</name>
        <dbReference type="ChEBI" id="CHEBI:15361"/>
    </ligand>
</feature>
<feature type="binding site" evidence="1">
    <location>
        <position position="203"/>
    </location>
    <ligand>
        <name>pyruvate</name>
        <dbReference type="ChEBI" id="CHEBI:15361"/>
    </ligand>
</feature>
<feature type="site" description="Part of a proton relay during catalysis" evidence="1">
    <location>
        <position position="44"/>
    </location>
</feature>
<feature type="site" description="Part of a proton relay during catalysis" evidence="1">
    <location>
        <position position="107"/>
    </location>
</feature>
<comment type="function">
    <text evidence="1">Catalyzes the condensation of (S)-aspartate-beta-semialdehyde [(S)-ASA] and pyruvate to 4-hydroxy-tetrahydrodipicolinate (HTPA).</text>
</comment>
<comment type="catalytic activity">
    <reaction evidence="1">
        <text>L-aspartate 4-semialdehyde + pyruvate = (2S,4S)-4-hydroxy-2,3,4,5-tetrahydrodipicolinate + H2O + H(+)</text>
        <dbReference type="Rhea" id="RHEA:34171"/>
        <dbReference type="ChEBI" id="CHEBI:15361"/>
        <dbReference type="ChEBI" id="CHEBI:15377"/>
        <dbReference type="ChEBI" id="CHEBI:15378"/>
        <dbReference type="ChEBI" id="CHEBI:67139"/>
        <dbReference type="ChEBI" id="CHEBI:537519"/>
        <dbReference type="EC" id="4.3.3.7"/>
    </reaction>
</comment>
<comment type="pathway">
    <text evidence="1">Amino-acid biosynthesis; L-lysine biosynthesis via DAP pathway; (S)-tetrahydrodipicolinate from L-aspartate: step 3/4.</text>
</comment>
<comment type="subunit">
    <text evidence="1">Homotetramer; dimer of dimers.</text>
</comment>
<comment type="subcellular location">
    <subcellularLocation>
        <location evidence="1">Cytoplasm</location>
    </subcellularLocation>
</comment>
<comment type="similarity">
    <text evidence="1">Belongs to the DapA family.</text>
</comment>
<comment type="caution">
    <text evidence="2">Was originally thought to be a dihydrodipicolinate synthase (DHDPS), catalyzing the condensation of (S)-aspartate-beta-semialdehyde [(S)-ASA] and pyruvate to dihydrodipicolinate (DHDP). However, it was shown in E.coli that the product of the enzymatic reaction is not dihydrodipicolinate but in fact (4S)-4-hydroxy-2,3,4,5-tetrahydro-(2S)-dipicolinic acid (HTPA), and that the consecutive dehydration reaction leading to DHDP is not spontaneous but catalyzed by DapB.</text>
</comment>
<organism>
    <name type="scientific">Acidithiobacillus ferrooxidans (strain ATCC 53993 / BNL-5-31)</name>
    <name type="common">Leptospirillum ferrooxidans (ATCC 53993)</name>
    <dbReference type="NCBI Taxonomy" id="380394"/>
    <lineage>
        <taxon>Bacteria</taxon>
        <taxon>Pseudomonadati</taxon>
        <taxon>Pseudomonadota</taxon>
        <taxon>Acidithiobacillia</taxon>
        <taxon>Acidithiobacillales</taxon>
        <taxon>Acidithiobacillaceae</taxon>
        <taxon>Acidithiobacillus</taxon>
    </lineage>
</organism>
<protein>
    <recommendedName>
        <fullName evidence="1">4-hydroxy-tetrahydrodipicolinate synthase</fullName>
        <shortName evidence="1">HTPA synthase</shortName>
        <ecNumber evidence="1">4.3.3.7</ecNumber>
    </recommendedName>
</protein>
<reference key="1">
    <citation type="submission" date="2008-08" db="EMBL/GenBank/DDBJ databases">
        <title>Complete sequence of Acidithiobacillus ferrooxidans ATCC 53993.</title>
        <authorList>
            <person name="Lucas S."/>
            <person name="Copeland A."/>
            <person name="Lapidus A."/>
            <person name="Glavina del Rio T."/>
            <person name="Dalin E."/>
            <person name="Tice H."/>
            <person name="Bruce D."/>
            <person name="Goodwin L."/>
            <person name="Pitluck S."/>
            <person name="Sims D."/>
            <person name="Brettin T."/>
            <person name="Detter J.C."/>
            <person name="Han C."/>
            <person name="Kuske C.R."/>
            <person name="Larimer F."/>
            <person name="Land M."/>
            <person name="Hauser L."/>
            <person name="Kyrpides N."/>
            <person name="Lykidis A."/>
            <person name="Borole A.P."/>
        </authorList>
    </citation>
    <scope>NUCLEOTIDE SEQUENCE [LARGE SCALE GENOMIC DNA]</scope>
    <source>
        <strain>ATCC 53993 / BNL-5-31</strain>
    </source>
</reference>